<name>HEM1_TERTT</name>
<keyword id="KW-0521">NADP</keyword>
<keyword id="KW-0560">Oxidoreductase</keyword>
<keyword id="KW-0627">Porphyrin biosynthesis</keyword>
<keyword id="KW-1185">Reference proteome</keyword>
<sequence>MTLLALGINHNTATLDVREKVAFSPAELEVALCALRESGLAEEVAILSTCNRTEIYCETGAEAQHLLVWLAEHKAASAQELQHAHYARWGDDAARHMMAVASGLDSLVLGEPQILGQMKSCYAVAREAGVLGRGLHDAFQRVFAVAKRVRSETAIGENPVSVAYAAVSLAQQIFSDLKQDTALLIGAGETIELVARHLKNQGIKKLIVANRTLENAHALAKEFAAEAILLADIPEYLPTADIVISSTASQLPLLGKGAVEVALKKRKHKPMFMVDIAVPRDIEPQVGDLADVYLFTVDDLKEVIDENKKSREEAAKTARTIIDEGVERYQLDQRALSAVELVKDFRQQTEAVRDQEVQKALNALRSGADPEELLLTLSRNLTNKFMHQPTTALKRASSEGREQLLQDFKSLFGLD</sequence>
<dbReference type="EC" id="1.2.1.70" evidence="1"/>
<dbReference type="EMBL" id="CP001614">
    <property type="protein sequence ID" value="ACR14420.1"/>
    <property type="molecule type" value="Genomic_DNA"/>
</dbReference>
<dbReference type="RefSeq" id="WP_015820534.1">
    <property type="nucleotide sequence ID" value="NC_012997.1"/>
</dbReference>
<dbReference type="SMR" id="C5BSZ7"/>
<dbReference type="STRING" id="377629.TERTU_3845"/>
<dbReference type="KEGG" id="ttu:TERTU_3845"/>
<dbReference type="eggNOG" id="COG0373">
    <property type="taxonomic scope" value="Bacteria"/>
</dbReference>
<dbReference type="HOGENOM" id="CLU_035113_2_2_6"/>
<dbReference type="OrthoDB" id="110209at2"/>
<dbReference type="UniPathway" id="UPA00251">
    <property type="reaction ID" value="UER00316"/>
</dbReference>
<dbReference type="Proteomes" id="UP000009080">
    <property type="component" value="Chromosome"/>
</dbReference>
<dbReference type="GO" id="GO:0008883">
    <property type="term" value="F:glutamyl-tRNA reductase activity"/>
    <property type="evidence" value="ECO:0007669"/>
    <property type="project" value="UniProtKB-UniRule"/>
</dbReference>
<dbReference type="GO" id="GO:0050661">
    <property type="term" value="F:NADP binding"/>
    <property type="evidence" value="ECO:0007669"/>
    <property type="project" value="InterPro"/>
</dbReference>
<dbReference type="GO" id="GO:0019353">
    <property type="term" value="P:protoporphyrinogen IX biosynthetic process from glutamate"/>
    <property type="evidence" value="ECO:0007669"/>
    <property type="project" value="TreeGrafter"/>
</dbReference>
<dbReference type="CDD" id="cd05213">
    <property type="entry name" value="NAD_bind_Glutamyl_tRNA_reduct"/>
    <property type="match status" value="1"/>
</dbReference>
<dbReference type="FunFam" id="3.30.460.30:FF:000001">
    <property type="entry name" value="Glutamyl-tRNA reductase"/>
    <property type="match status" value="1"/>
</dbReference>
<dbReference type="FunFam" id="3.40.50.720:FF:000031">
    <property type="entry name" value="Glutamyl-tRNA reductase"/>
    <property type="match status" value="1"/>
</dbReference>
<dbReference type="Gene3D" id="3.30.460.30">
    <property type="entry name" value="Glutamyl-tRNA reductase, N-terminal domain"/>
    <property type="match status" value="1"/>
</dbReference>
<dbReference type="Gene3D" id="3.40.50.720">
    <property type="entry name" value="NAD(P)-binding Rossmann-like Domain"/>
    <property type="match status" value="1"/>
</dbReference>
<dbReference type="HAMAP" id="MF_00087">
    <property type="entry name" value="Glu_tRNA_reductase"/>
    <property type="match status" value="1"/>
</dbReference>
<dbReference type="InterPro" id="IPR000343">
    <property type="entry name" value="4pyrrol_synth_GluRdtase"/>
</dbReference>
<dbReference type="InterPro" id="IPR015896">
    <property type="entry name" value="4pyrrol_synth_GluRdtase_dimer"/>
</dbReference>
<dbReference type="InterPro" id="IPR015895">
    <property type="entry name" value="4pyrrol_synth_GluRdtase_N"/>
</dbReference>
<dbReference type="InterPro" id="IPR018214">
    <property type="entry name" value="GluRdtase_CS"/>
</dbReference>
<dbReference type="InterPro" id="IPR036453">
    <property type="entry name" value="GluRdtase_dimer_dom_sf"/>
</dbReference>
<dbReference type="InterPro" id="IPR036343">
    <property type="entry name" value="GluRdtase_N_sf"/>
</dbReference>
<dbReference type="InterPro" id="IPR036291">
    <property type="entry name" value="NAD(P)-bd_dom_sf"/>
</dbReference>
<dbReference type="InterPro" id="IPR006151">
    <property type="entry name" value="Shikm_DH/Glu-tRNA_Rdtase"/>
</dbReference>
<dbReference type="NCBIfam" id="TIGR01035">
    <property type="entry name" value="hemA"/>
    <property type="match status" value="1"/>
</dbReference>
<dbReference type="PANTHER" id="PTHR43013">
    <property type="entry name" value="GLUTAMYL-TRNA REDUCTASE"/>
    <property type="match status" value="1"/>
</dbReference>
<dbReference type="PANTHER" id="PTHR43013:SF1">
    <property type="entry name" value="GLUTAMYL-TRNA REDUCTASE"/>
    <property type="match status" value="1"/>
</dbReference>
<dbReference type="Pfam" id="PF00745">
    <property type="entry name" value="GlutR_dimer"/>
    <property type="match status" value="1"/>
</dbReference>
<dbReference type="Pfam" id="PF05201">
    <property type="entry name" value="GlutR_N"/>
    <property type="match status" value="1"/>
</dbReference>
<dbReference type="Pfam" id="PF01488">
    <property type="entry name" value="Shikimate_DH"/>
    <property type="match status" value="1"/>
</dbReference>
<dbReference type="PIRSF" id="PIRSF000445">
    <property type="entry name" value="4pyrrol_synth_GluRdtase"/>
    <property type="match status" value="1"/>
</dbReference>
<dbReference type="SUPFAM" id="SSF69742">
    <property type="entry name" value="Glutamyl tRNA-reductase catalytic, N-terminal domain"/>
    <property type="match status" value="1"/>
</dbReference>
<dbReference type="SUPFAM" id="SSF69075">
    <property type="entry name" value="Glutamyl tRNA-reductase dimerization domain"/>
    <property type="match status" value="1"/>
</dbReference>
<dbReference type="SUPFAM" id="SSF51735">
    <property type="entry name" value="NAD(P)-binding Rossmann-fold domains"/>
    <property type="match status" value="1"/>
</dbReference>
<dbReference type="PROSITE" id="PS00747">
    <property type="entry name" value="GLUTR"/>
    <property type="match status" value="1"/>
</dbReference>
<accession>C5BSZ7</accession>
<gene>
    <name evidence="1" type="primary">hemA</name>
    <name type="ordered locus">TERTU_3845</name>
</gene>
<reference key="1">
    <citation type="journal article" date="2009" name="PLoS ONE">
        <title>The complete genome of Teredinibacter turnerae T7901: an intracellular endosymbiont of marine wood-boring bivalves (shipworms).</title>
        <authorList>
            <person name="Yang J.C."/>
            <person name="Madupu R."/>
            <person name="Durkin A.S."/>
            <person name="Ekborg N.A."/>
            <person name="Pedamallu C.S."/>
            <person name="Hostetler J.B."/>
            <person name="Radune D."/>
            <person name="Toms B.S."/>
            <person name="Henrissat B."/>
            <person name="Coutinho P.M."/>
            <person name="Schwarz S."/>
            <person name="Field L."/>
            <person name="Trindade-Silva A.E."/>
            <person name="Soares C.A.G."/>
            <person name="Elshahawi S."/>
            <person name="Hanora A."/>
            <person name="Schmidt E.W."/>
            <person name="Haygood M.G."/>
            <person name="Posfai J."/>
            <person name="Benner J."/>
            <person name="Madinger C."/>
            <person name="Nove J."/>
            <person name="Anton B."/>
            <person name="Chaudhary K."/>
            <person name="Foster J."/>
            <person name="Holman A."/>
            <person name="Kumar S."/>
            <person name="Lessard P.A."/>
            <person name="Luyten Y.A."/>
            <person name="Slatko B."/>
            <person name="Wood N."/>
            <person name="Wu B."/>
            <person name="Teplitski M."/>
            <person name="Mougous J.D."/>
            <person name="Ward N."/>
            <person name="Eisen J.A."/>
            <person name="Badger J.H."/>
            <person name="Distel D.L."/>
        </authorList>
    </citation>
    <scope>NUCLEOTIDE SEQUENCE [LARGE SCALE GENOMIC DNA]</scope>
    <source>
        <strain>ATCC 39867 / T7901</strain>
    </source>
</reference>
<evidence type="ECO:0000255" key="1">
    <source>
        <dbReference type="HAMAP-Rule" id="MF_00087"/>
    </source>
</evidence>
<proteinExistence type="inferred from homology"/>
<comment type="function">
    <text evidence="1">Catalyzes the NADPH-dependent reduction of glutamyl-tRNA(Glu) to glutamate 1-semialdehyde (GSA).</text>
</comment>
<comment type="catalytic activity">
    <reaction evidence="1">
        <text>(S)-4-amino-5-oxopentanoate + tRNA(Glu) + NADP(+) = L-glutamyl-tRNA(Glu) + NADPH + H(+)</text>
        <dbReference type="Rhea" id="RHEA:12344"/>
        <dbReference type="Rhea" id="RHEA-COMP:9663"/>
        <dbReference type="Rhea" id="RHEA-COMP:9680"/>
        <dbReference type="ChEBI" id="CHEBI:15378"/>
        <dbReference type="ChEBI" id="CHEBI:57501"/>
        <dbReference type="ChEBI" id="CHEBI:57783"/>
        <dbReference type="ChEBI" id="CHEBI:58349"/>
        <dbReference type="ChEBI" id="CHEBI:78442"/>
        <dbReference type="ChEBI" id="CHEBI:78520"/>
        <dbReference type="EC" id="1.2.1.70"/>
    </reaction>
</comment>
<comment type="pathway">
    <text evidence="1">Porphyrin-containing compound metabolism; protoporphyrin-IX biosynthesis; 5-aminolevulinate from L-glutamyl-tRNA(Glu): step 1/2.</text>
</comment>
<comment type="subunit">
    <text evidence="1">Homodimer.</text>
</comment>
<comment type="domain">
    <text evidence="1">Possesses an unusual extended V-shaped dimeric structure with each monomer consisting of three distinct domains arranged along a curved 'spinal' alpha-helix. The N-terminal catalytic domain specifically recognizes the glutamate moiety of the substrate. The second domain is the NADPH-binding domain, and the third C-terminal domain is responsible for dimerization.</text>
</comment>
<comment type="miscellaneous">
    <text evidence="1">During catalysis, the active site Cys acts as a nucleophile attacking the alpha-carbonyl group of tRNA-bound glutamate with the formation of a thioester intermediate between enzyme and glutamate, and the concomitant release of tRNA(Glu). The thioester intermediate is finally reduced by direct hydride transfer from NADPH, to form the product GSA.</text>
</comment>
<comment type="similarity">
    <text evidence="1">Belongs to the glutamyl-tRNA reductase family.</text>
</comment>
<protein>
    <recommendedName>
        <fullName evidence="1">Glutamyl-tRNA reductase</fullName>
        <shortName evidence="1">GluTR</shortName>
        <ecNumber evidence="1">1.2.1.70</ecNumber>
    </recommendedName>
</protein>
<feature type="chain" id="PRO_1000202648" description="Glutamyl-tRNA reductase">
    <location>
        <begin position="1"/>
        <end position="415"/>
    </location>
</feature>
<feature type="active site" description="Nucleophile" evidence="1">
    <location>
        <position position="50"/>
    </location>
</feature>
<feature type="binding site" evidence="1">
    <location>
        <begin position="49"/>
        <end position="52"/>
    </location>
    <ligand>
        <name>substrate</name>
    </ligand>
</feature>
<feature type="binding site" evidence="1">
    <location>
        <position position="106"/>
    </location>
    <ligand>
        <name>substrate</name>
    </ligand>
</feature>
<feature type="binding site" evidence="1">
    <location>
        <begin position="111"/>
        <end position="113"/>
    </location>
    <ligand>
        <name>substrate</name>
    </ligand>
</feature>
<feature type="binding site" evidence="1">
    <location>
        <position position="117"/>
    </location>
    <ligand>
        <name>substrate</name>
    </ligand>
</feature>
<feature type="binding site" evidence="1">
    <location>
        <begin position="186"/>
        <end position="191"/>
    </location>
    <ligand>
        <name>NADP(+)</name>
        <dbReference type="ChEBI" id="CHEBI:58349"/>
    </ligand>
</feature>
<feature type="site" description="Important for activity" evidence="1">
    <location>
        <position position="96"/>
    </location>
</feature>
<organism>
    <name type="scientific">Teredinibacter turnerae (strain ATCC 39867 / T7901)</name>
    <dbReference type="NCBI Taxonomy" id="377629"/>
    <lineage>
        <taxon>Bacteria</taxon>
        <taxon>Pseudomonadati</taxon>
        <taxon>Pseudomonadota</taxon>
        <taxon>Gammaproteobacteria</taxon>
        <taxon>Cellvibrionales</taxon>
        <taxon>Cellvibrionaceae</taxon>
        <taxon>Teredinibacter</taxon>
    </lineage>
</organism>